<dbReference type="EC" id="2.7.3.-"/>
<dbReference type="EMBL" id="M92421">
    <property type="protein sequence ID" value="AAC36997.1"/>
    <property type="molecule type" value="Unassigned_DNA"/>
</dbReference>
<dbReference type="PIR" id="S32871">
    <property type="entry name" value="S32871"/>
</dbReference>
<dbReference type="SMR" id="P29905"/>
<dbReference type="BRENDA" id="2.7.13.3">
    <property type="organism ID" value="3341"/>
</dbReference>
<dbReference type="GO" id="GO:0005886">
    <property type="term" value="C:plasma membrane"/>
    <property type="evidence" value="ECO:0007669"/>
    <property type="project" value="UniProtKB-SubCell"/>
</dbReference>
<dbReference type="GO" id="GO:0000155">
    <property type="term" value="F:phosphorelay sensor kinase activity"/>
    <property type="evidence" value="ECO:0007669"/>
    <property type="project" value="InterPro"/>
</dbReference>
<dbReference type="GO" id="GO:0046983">
    <property type="term" value="F:protein dimerization activity"/>
    <property type="evidence" value="ECO:0007669"/>
    <property type="project" value="InterPro"/>
</dbReference>
<dbReference type="GO" id="GO:0015945">
    <property type="term" value="P:methanol metabolic process"/>
    <property type="evidence" value="ECO:0007669"/>
    <property type="project" value="UniProtKB-KW"/>
</dbReference>
<dbReference type="CDD" id="cd06225">
    <property type="entry name" value="HAMP"/>
    <property type="match status" value="1"/>
</dbReference>
<dbReference type="CDD" id="cd16917">
    <property type="entry name" value="HATPase_UhpB-NarQ-NarX-like"/>
    <property type="match status" value="1"/>
</dbReference>
<dbReference type="Gene3D" id="1.20.5.1930">
    <property type="match status" value="1"/>
</dbReference>
<dbReference type="Gene3D" id="6.10.340.10">
    <property type="match status" value="1"/>
</dbReference>
<dbReference type="Gene3D" id="3.30.565.10">
    <property type="entry name" value="Histidine kinase-like ATPase, C-terminal domain"/>
    <property type="match status" value="1"/>
</dbReference>
<dbReference type="InterPro" id="IPR003660">
    <property type="entry name" value="HAMP_dom"/>
</dbReference>
<dbReference type="InterPro" id="IPR036890">
    <property type="entry name" value="HATPase_C_sf"/>
</dbReference>
<dbReference type="InterPro" id="IPR032244">
    <property type="entry name" value="LapD_MoxY_N"/>
</dbReference>
<dbReference type="InterPro" id="IPR050482">
    <property type="entry name" value="Sensor_HK_TwoCompSys"/>
</dbReference>
<dbReference type="InterPro" id="IPR011712">
    <property type="entry name" value="Sig_transdc_His_kin_sub3_dim/P"/>
</dbReference>
<dbReference type="PANTHER" id="PTHR24421">
    <property type="entry name" value="NITRATE/NITRITE SENSOR PROTEIN NARX-RELATED"/>
    <property type="match status" value="1"/>
</dbReference>
<dbReference type="PANTHER" id="PTHR24421:SF58">
    <property type="entry name" value="SIGNAL TRANSDUCTION HISTIDINE-PROTEIN KINASE_PHOSPHATASE UHPB"/>
    <property type="match status" value="1"/>
</dbReference>
<dbReference type="Pfam" id="PF00672">
    <property type="entry name" value="HAMP"/>
    <property type="match status" value="1"/>
</dbReference>
<dbReference type="Pfam" id="PF07730">
    <property type="entry name" value="HisKA_3"/>
    <property type="match status" value="1"/>
</dbReference>
<dbReference type="Pfam" id="PF16448">
    <property type="entry name" value="LapD_MoxY_N"/>
    <property type="match status" value="1"/>
</dbReference>
<dbReference type="SMART" id="SM00304">
    <property type="entry name" value="HAMP"/>
    <property type="match status" value="1"/>
</dbReference>
<dbReference type="SUPFAM" id="SSF55874">
    <property type="entry name" value="ATPase domain of HSP90 chaperone/DNA topoisomerase II/histidine kinase"/>
    <property type="match status" value="1"/>
</dbReference>
<dbReference type="PROSITE" id="PS50885">
    <property type="entry name" value="HAMP"/>
    <property type="match status" value="1"/>
</dbReference>
<protein>
    <recommendedName>
        <fullName>Methanol utilization control sensor protein MoxY</fullName>
        <ecNumber>2.7.3.-</ecNumber>
    </recommendedName>
</protein>
<keyword id="KW-0997">Cell inner membrane</keyword>
<keyword id="KW-1003">Cell membrane</keyword>
<keyword id="KW-0418">Kinase</keyword>
<keyword id="KW-0472">Membrane</keyword>
<keyword id="KW-0485">Methanol utilization</keyword>
<keyword id="KW-0597">Phosphoprotein</keyword>
<keyword id="KW-0808">Transferase</keyword>
<keyword id="KW-0812">Transmembrane</keyword>
<keyword id="KW-1133">Transmembrane helix</keyword>
<keyword id="KW-0902">Two-component regulatory system</keyword>
<gene>
    <name type="primary">moxY</name>
</gene>
<proteinExistence type="predicted"/>
<sequence>MGLACAVSLSLCLIVSAILIVNARQAVQEETESAFRLAHEAVVRRLPPSHGGRDTMTEAIGLAEEIDGLRHVSARILDPEGQPLQHRAHGQLRSEASAPQWFSALMTPPLVEALVPITHYPNVLGMLRVAADPTDEIAEVWGDFSIILPVLFLAGLAMVGLAFLMTTLLTRRLQSVQAAMAQMQDGRLSVRAPDDRLTEFADLAAGVNALASHLQAEQAENDLLQARLIGSSEAERSRIALDLHDEMGPQLFALRAAVSHAQAMTADLPERPAALDETLDAIAGHALEVQRSARTAINDLRPMLLGEASLAELLAELVTGFRDVASETRVVLDVDPEVEGSSPGELAELSIYRFARESVLNAMRHGRATVVRVSLDTMPDEPGQIVVRVTDNGKGPQSGTGRPTPGFGQIGIEDRARALGATYLPPWRDNRLTHTELRMPRPCKLR</sequence>
<evidence type="ECO:0000255" key="1"/>
<evidence type="ECO:0000255" key="2">
    <source>
        <dbReference type="PROSITE-ProRule" id="PRU00102"/>
    </source>
</evidence>
<evidence type="ECO:0000256" key="3">
    <source>
        <dbReference type="SAM" id="MobiDB-lite"/>
    </source>
</evidence>
<evidence type="ECO:0000305" key="4"/>
<organism>
    <name type="scientific">Paracoccus denitrificans</name>
    <dbReference type="NCBI Taxonomy" id="266"/>
    <lineage>
        <taxon>Bacteria</taxon>
        <taxon>Pseudomonadati</taxon>
        <taxon>Pseudomonadota</taxon>
        <taxon>Alphaproteobacteria</taxon>
        <taxon>Rhodobacterales</taxon>
        <taxon>Paracoccaceae</taxon>
        <taxon>Paracoccus</taxon>
    </lineage>
</organism>
<name>MOXY_PARDE</name>
<accession>P29905</accession>
<reference key="1">
    <citation type="journal article" date="1993" name="Mol. Microbiol.">
        <title>Identification of a two-component regulatory system controlling methanol dehydrogenase synthesis in Paracoccus denitrificans.</title>
        <authorList>
            <person name="Harms N."/>
            <person name="Reijnders W.N."/>
            <person name="Anazawa H."/>
            <person name="de Palen C.J."/>
            <person name="van Spanning R.J.M."/>
            <person name="Oltmann L.F."/>
            <person name="Stouthamer A.H."/>
        </authorList>
    </citation>
    <scope>NUCLEOTIDE SEQUENCE [GENOMIC DNA]</scope>
</reference>
<feature type="chain" id="PRO_0000074805" description="Methanol utilization control sensor protein MoxY">
    <location>
        <begin position="1"/>
        <end position="446"/>
    </location>
</feature>
<feature type="transmembrane region" description="Helical" evidence="1">
    <location>
        <begin position="1"/>
        <end position="21"/>
    </location>
</feature>
<feature type="transmembrane region" description="Helical" evidence="1">
    <location>
        <begin position="101"/>
        <end position="121"/>
    </location>
</feature>
<feature type="transmembrane region" description="Helical" evidence="1">
    <location>
        <begin position="144"/>
        <end position="164"/>
    </location>
</feature>
<feature type="domain" description="HAMP" evidence="2">
    <location>
        <begin position="167"/>
        <end position="219"/>
    </location>
</feature>
<feature type="region of interest" description="Disordered" evidence="3">
    <location>
        <begin position="390"/>
        <end position="409"/>
    </location>
</feature>
<comment type="function">
    <text>Member of the two-component regulatory system MoxY/MoxX probably involved in the regulation of the methanol dehydrogenase expression. May function as a membrane-associated protein kinase that phosphorylates MoxX in response to environmental signals.</text>
</comment>
<comment type="subcellular location">
    <subcellularLocation>
        <location evidence="4">Cell inner membrane</location>
        <topology evidence="4">Multi-pass membrane protein</topology>
    </subcellularLocation>
</comment>